<evidence type="ECO:0000255" key="1">
    <source>
        <dbReference type="HAMAP-Rule" id="MF_01218"/>
    </source>
</evidence>
<keyword id="KW-0021">Allosteric enzyme</keyword>
<keyword id="KW-0328">Glycosyltransferase</keyword>
<keyword id="KW-0342">GTP-binding</keyword>
<keyword id="KW-0460">Magnesium</keyword>
<keyword id="KW-0547">Nucleotide-binding</keyword>
<keyword id="KW-1185">Reference proteome</keyword>
<keyword id="KW-0808">Transferase</keyword>
<name>UPP_CITBB</name>
<gene>
    <name evidence="1" type="primary">upp</name>
    <name type="ordered locus">Gbem_0463</name>
</gene>
<comment type="function">
    <text evidence="1">Catalyzes the conversion of uracil and 5-phospho-alpha-D-ribose 1-diphosphate (PRPP) to UMP and diphosphate.</text>
</comment>
<comment type="catalytic activity">
    <reaction evidence="1">
        <text>UMP + diphosphate = 5-phospho-alpha-D-ribose 1-diphosphate + uracil</text>
        <dbReference type="Rhea" id="RHEA:13017"/>
        <dbReference type="ChEBI" id="CHEBI:17568"/>
        <dbReference type="ChEBI" id="CHEBI:33019"/>
        <dbReference type="ChEBI" id="CHEBI:57865"/>
        <dbReference type="ChEBI" id="CHEBI:58017"/>
        <dbReference type="EC" id="2.4.2.9"/>
    </reaction>
</comment>
<comment type="cofactor">
    <cofactor evidence="1">
        <name>Mg(2+)</name>
        <dbReference type="ChEBI" id="CHEBI:18420"/>
    </cofactor>
    <text evidence="1">Binds 1 Mg(2+) ion per subunit. The magnesium is bound as Mg-PRPP.</text>
</comment>
<comment type="activity regulation">
    <text evidence="1">Allosterically activated by GTP.</text>
</comment>
<comment type="pathway">
    <text evidence="1">Pyrimidine metabolism; UMP biosynthesis via salvage pathway; UMP from uracil: step 1/1.</text>
</comment>
<comment type="similarity">
    <text evidence="1">Belongs to the UPRTase family.</text>
</comment>
<feature type="chain" id="PRO_1000139130" description="Uracil phosphoribosyltransferase">
    <location>
        <begin position="1"/>
        <end position="209"/>
    </location>
</feature>
<feature type="binding site" evidence="1">
    <location>
        <position position="79"/>
    </location>
    <ligand>
        <name>5-phospho-alpha-D-ribose 1-diphosphate</name>
        <dbReference type="ChEBI" id="CHEBI:58017"/>
    </ligand>
</feature>
<feature type="binding site" evidence="1">
    <location>
        <position position="104"/>
    </location>
    <ligand>
        <name>5-phospho-alpha-D-ribose 1-diphosphate</name>
        <dbReference type="ChEBI" id="CHEBI:58017"/>
    </ligand>
</feature>
<feature type="binding site" evidence="1">
    <location>
        <begin position="131"/>
        <end position="139"/>
    </location>
    <ligand>
        <name>5-phospho-alpha-D-ribose 1-diphosphate</name>
        <dbReference type="ChEBI" id="CHEBI:58017"/>
    </ligand>
</feature>
<feature type="binding site" evidence="1">
    <location>
        <position position="194"/>
    </location>
    <ligand>
        <name>uracil</name>
        <dbReference type="ChEBI" id="CHEBI:17568"/>
    </ligand>
</feature>
<feature type="binding site" evidence="1">
    <location>
        <begin position="199"/>
        <end position="201"/>
    </location>
    <ligand>
        <name>uracil</name>
        <dbReference type="ChEBI" id="CHEBI:17568"/>
    </ligand>
</feature>
<feature type="binding site" evidence="1">
    <location>
        <position position="200"/>
    </location>
    <ligand>
        <name>5-phospho-alpha-D-ribose 1-diphosphate</name>
        <dbReference type="ChEBI" id="CHEBI:58017"/>
    </ligand>
</feature>
<proteinExistence type="inferred from homology"/>
<dbReference type="EC" id="2.4.2.9" evidence="1"/>
<dbReference type="EMBL" id="CP001124">
    <property type="protein sequence ID" value="ACH37492.1"/>
    <property type="molecule type" value="Genomic_DNA"/>
</dbReference>
<dbReference type="RefSeq" id="WP_012528899.1">
    <property type="nucleotide sequence ID" value="NC_011146.1"/>
</dbReference>
<dbReference type="SMR" id="B5EBM3"/>
<dbReference type="STRING" id="404380.Gbem_0463"/>
<dbReference type="KEGG" id="gbm:Gbem_0463"/>
<dbReference type="eggNOG" id="COG0035">
    <property type="taxonomic scope" value="Bacteria"/>
</dbReference>
<dbReference type="HOGENOM" id="CLU_067096_2_2_7"/>
<dbReference type="OrthoDB" id="9781675at2"/>
<dbReference type="UniPathway" id="UPA00574">
    <property type="reaction ID" value="UER00636"/>
</dbReference>
<dbReference type="Proteomes" id="UP000008825">
    <property type="component" value="Chromosome"/>
</dbReference>
<dbReference type="GO" id="GO:0005525">
    <property type="term" value="F:GTP binding"/>
    <property type="evidence" value="ECO:0007669"/>
    <property type="project" value="UniProtKB-KW"/>
</dbReference>
<dbReference type="GO" id="GO:0000287">
    <property type="term" value="F:magnesium ion binding"/>
    <property type="evidence" value="ECO:0007669"/>
    <property type="project" value="UniProtKB-UniRule"/>
</dbReference>
<dbReference type="GO" id="GO:0004845">
    <property type="term" value="F:uracil phosphoribosyltransferase activity"/>
    <property type="evidence" value="ECO:0007669"/>
    <property type="project" value="UniProtKB-UniRule"/>
</dbReference>
<dbReference type="GO" id="GO:0044206">
    <property type="term" value="P:UMP salvage"/>
    <property type="evidence" value="ECO:0007669"/>
    <property type="project" value="UniProtKB-UniRule"/>
</dbReference>
<dbReference type="GO" id="GO:0006223">
    <property type="term" value="P:uracil salvage"/>
    <property type="evidence" value="ECO:0007669"/>
    <property type="project" value="InterPro"/>
</dbReference>
<dbReference type="CDD" id="cd06223">
    <property type="entry name" value="PRTases_typeI"/>
    <property type="match status" value="1"/>
</dbReference>
<dbReference type="FunFam" id="3.40.50.2020:FF:000003">
    <property type="entry name" value="Uracil phosphoribosyltransferase"/>
    <property type="match status" value="1"/>
</dbReference>
<dbReference type="Gene3D" id="3.40.50.2020">
    <property type="match status" value="1"/>
</dbReference>
<dbReference type="HAMAP" id="MF_01218_B">
    <property type="entry name" value="Upp_B"/>
    <property type="match status" value="1"/>
</dbReference>
<dbReference type="InterPro" id="IPR000836">
    <property type="entry name" value="PRibTrfase_dom"/>
</dbReference>
<dbReference type="InterPro" id="IPR029057">
    <property type="entry name" value="PRTase-like"/>
</dbReference>
<dbReference type="InterPro" id="IPR034332">
    <property type="entry name" value="Upp_B"/>
</dbReference>
<dbReference type="InterPro" id="IPR050054">
    <property type="entry name" value="UPRTase/APRTase"/>
</dbReference>
<dbReference type="InterPro" id="IPR005765">
    <property type="entry name" value="Ura_phspho_trans"/>
</dbReference>
<dbReference type="NCBIfam" id="NF001097">
    <property type="entry name" value="PRK00129.1"/>
    <property type="match status" value="1"/>
</dbReference>
<dbReference type="NCBIfam" id="TIGR01091">
    <property type="entry name" value="upp"/>
    <property type="match status" value="1"/>
</dbReference>
<dbReference type="PANTHER" id="PTHR32315">
    <property type="entry name" value="ADENINE PHOSPHORIBOSYLTRANSFERASE"/>
    <property type="match status" value="1"/>
</dbReference>
<dbReference type="PANTHER" id="PTHR32315:SF4">
    <property type="entry name" value="URACIL PHOSPHORIBOSYLTRANSFERASE, CHLOROPLASTIC"/>
    <property type="match status" value="1"/>
</dbReference>
<dbReference type="Pfam" id="PF14681">
    <property type="entry name" value="UPRTase"/>
    <property type="match status" value="1"/>
</dbReference>
<dbReference type="SUPFAM" id="SSF53271">
    <property type="entry name" value="PRTase-like"/>
    <property type="match status" value="1"/>
</dbReference>
<reference key="1">
    <citation type="submission" date="2008-07" db="EMBL/GenBank/DDBJ databases">
        <title>Complete sequence of Geobacter bemidjiensis BEM.</title>
        <authorList>
            <consortium name="US DOE Joint Genome Institute"/>
            <person name="Lucas S."/>
            <person name="Copeland A."/>
            <person name="Lapidus A."/>
            <person name="Glavina del Rio T."/>
            <person name="Dalin E."/>
            <person name="Tice H."/>
            <person name="Bruce D."/>
            <person name="Goodwin L."/>
            <person name="Pitluck S."/>
            <person name="Kiss H."/>
            <person name="Brettin T."/>
            <person name="Detter J.C."/>
            <person name="Han C."/>
            <person name="Kuske C.R."/>
            <person name="Schmutz J."/>
            <person name="Larimer F."/>
            <person name="Land M."/>
            <person name="Hauser L."/>
            <person name="Kyrpides N."/>
            <person name="Lykidis A."/>
            <person name="Lovley D."/>
            <person name="Richardson P."/>
        </authorList>
    </citation>
    <scope>NUCLEOTIDE SEQUENCE [LARGE SCALE GENOMIC DNA]</scope>
    <source>
        <strain>ATCC BAA-1014 / DSM 16622 / JCM 12645 / Bem</strain>
    </source>
</reference>
<protein>
    <recommendedName>
        <fullName evidence="1">Uracil phosphoribosyltransferase</fullName>
        <ecNumber evidence="1">2.4.2.9</ecNumber>
    </recommendedName>
    <alternativeName>
        <fullName evidence="1">UMP pyrophosphorylase</fullName>
    </alternativeName>
    <alternativeName>
        <fullName evidence="1">UPRTase</fullName>
    </alternativeName>
</protein>
<accession>B5EBM3</accession>
<organism>
    <name type="scientific">Citrifermentans bemidjiense (strain ATCC BAA-1014 / DSM 16622 / JCM 12645 / Bem)</name>
    <name type="common">Geobacter bemidjiensis</name>
    <dbReference type="NCBI Taxonomy" id="404380"/>
    <lineage>
        <taxon>Bacteria</taxon>
        <taxon>Pseudomonadati</taxon>
        <taxon>Thermodesulfobacteriota</taxon>
        <taxon>Desulfuromonadia</taxon>
        <taxon>Geobacterales</taxon>
        <taxon>Geobacteraceae</taxon>
        <taxon>Citrifermentans</taxon>
    </lineage>
</organism>
<sequence>MSVHEVNHPLVKHKIGLMREAGISTKKFRELTSEIACLLAYEASRDFQIEPRTITGWDGSKVMIQQLKGKKVTVVPILRAGIGMLDGVLDMIPNAKVSVVGLARNEETLEAHTYFERFVGSLDERLALIIDPMLATGGSMAATIEMLKKNGCLQIRVLCLVAAPEGLAKITAAYPEIDIYVAAIDERLNEQGYILPGLGDAGDKIFGTK</sequence>